<accession>Q2NAR9</accession>
<proteinExistence type="inferred from homology"/>
<sequence>MSTAEQTQSDIMHRFWHDDLAAADPEIAEAVSNELKRQQDKIELIASENIASKAVLEATGSVFTNKYAEGYPGKRYYGGCDYADVVETLAIERAKELFGCNFANVQPNSGSQMNQAVFLALLQPGDTFMGLDLNSGGHLTHGSPVNISGKWFNPVSYGVRKDDELIDMDEVAETAREHKPKLIICGGTAYSRLWDFPRFREIADEVDATLLCDMSHISGLVAGGAHPSPFPHAHIVTSTTHKSLRGPRSGIILWNDEDLTKPLNMAVFPGLQGGPLMHVVAAKAVAFREALRPDFRTYAHAVVENARALAASLEENGLRIVSGGTDNHSMLVDLTAKDVTGKAAEAGLDRAWLTCNKNGIPYDTRSPFVTSGIRLGTPAGTTRGFGPAEFRKVGALIAEVVDGLAKNGPEGDAQVEESVRGRVSELCSQFPVYP</sequence>
<comment type="function">
    <text evidence="1">Catalyzes the reversible interconversion of serine and glycine with tetrahydrofolate (THF) serving as the one-carbon carrier. This reaction serves as the major source of one-carbon groups required for the biosynthesis of purines, thymidylate, methionine, and other important biomolecules. Also exhibits THF-independent aldolase activity toward beta-hydroxyamino acids, producing glycine and aldehydes, via a retro-aldol mechanism.</text>
</comment>
<comment type="catalytic activity">
    <reaction evidence="1">
        <text>(6R)-5,10-methylene-5,6,7,8-tetrahydrofolate + glycine + H2O = (6S)-5,6,7,8-tetrahydrofolate + L-serine</text>
        <dbReference type="Rhea" id="RHEA:15481"/>
        <dbReference type="ChEBI" id="CHEBI:15377"/>
        <dbReference type="ChEBI" id="CHEBI:15636"/>
        <dbReference type="ChEBI" id="CHEBI:33384"/>
        <dbReference type="ChEBI" id="CHEBI:57305"/>
        <dbReference type="ChEBI" id="CHEBI:57453"/>
        <dbReference type="EC" id="2.1.2.1"/>
    </reaction>
</comment>
<comment type="cofactor">
    <cofactor evidence="1">
        <name>pyridoxal 5'-phosphate</name>
        <dbReference type="ChEBI" id="CHEBI:597326"/>
    </cofactor>
</comment>
<comment type="pathway">
    <text evidence="1">One-carbon metabolism; tetrahydrofolate interconversion.</text>
</comment>
<comment type="pathway">
    <text evidence="1">Amino-acid biosynthesis; glycine biosynthesis; glycine from L-serine: step 1/1.</text>
</comment>
<comment type="subunit">
    <text evidence="1">Homodimer.</text>
</comment>
<comment type="subcellular location">
    <subcellularLocation>
        <location evidence="1">Cytoplasm</location>
    </subcellularLocation>
</comment>
<comment type="similarity">
    <text evidence="1">Belongs to the SHMT family.</text>
</comment>
<gene>
    <name evidence="1" type="primary">glyA</name>
    <name type="ordered locus">ELI_05650</name>
</gene>
<reference key="1">
    <citation type="journal article" date="2009" name="J. Bacteriol.">
        <title>Complete genome sequence of Erythrobacter litoralis HTCC2594.</title>
        <authorList>
            <person name="Oh H.M."/>
            <person name="Giovannoni S.J."/>
            <person name="Ferriera S."/>
            <person name="Johnson J."/>
            <person name="Cho J.C."/>
        </authorList>
    </citation>
    <scope>NUCLEOTIDE SEQUENCE [LARGE SCALE GENOMIC DNA]</scope>
    <source>
        <strain>HTCC2594</strain>
    </source>
</reference>
<feature type="chain" id="PRO_1000006248" description="Serine hydroxymethyltransferase">
    <location>
        <begin position="1"/>
        <end position="434"/>
    </location>
</feature>
<feature type="binding site" evidence="1">
    <location>
        <position position="133"/>
    </location>
    <ligand>
        <name>(6S)-5,6,7,8-tetrahydrofolate</name>
        <dbReference type="ChEBI" id="CHEBI:57453"/>
    </ligand>
</feature>
<feature type="binding site" evidence="1">
    <location>
        <begin position="137"/>
        <end position="139"/>
    </location>
    <ligand>
        <name>(6S)-5,6,7,8-tetrahydrofolate</name>
        <dbReference type="ChEBI" id="CHEBI:57453"/>
    </ligand>
</feature>
<feature type="binding site" evidence="1">
    <location>
        <begin position="366"/>
        <end position="368"/>
    </location>
    <ligand>
        <name>(6S)-5,6,7,8-tetrahydrofolate</name>
        <dbReference type="ChEBI" id="CHEBI:57453"/>
    </ligand>
</feature>
<feature type="site" description="Plays an important role in substrate specificity" evidence="1">
    <location>
        <position position="241"/>
    </location>
</feature>
<feature type="modified residue" description="N6-(pyridoxal phosphate)lysine" evidence="1">
    <location>
        <position position="242"/>
    </location>
</feature>
<evidence type="ECO:0000255" key="1">
    <source>
        <dbReference type="HAMAP-Rule" id="MF_00051"/>
    </source>
</evidence>
<protein>
    <recommendedName>
        <fullName evidence="1">Serine hydroxymethyltransferase</fullName>
        <shortName evidence="1">SHMT</shortName>
        <shortName evidence="1">Serine methylase</shortName>
        <ecNumber evidence="1">2.1.2.1</ecNumber>
    </recommendedName>
</protein>
<organism>
    <name type="scientific">Erythrobacter litoralis (strain HTCC2594)</name>
    <dbReference type="NCBI Taxonomy" id="314225"/>
    <lineage>
        <taxon>Bacteria</taxon>
        <taxon>Pseudomonadati</taxon>
        <taxon>Pseudomonadota</taxon>
        <taxon>Alphaproteobacteria</taxon>
        <taxon>Sphingomonadales</taxon>
        <taxon>Erythrobacteraceae</taxon>
        <taxon>Erythrobacter/Porphyrobacter group</taxon>
        <taxon>Erythrobacter</taxon>
    </lineage>
</organism>
<name>GLYA_ERYLH</name>
<dbReference type="EC" id="2.1.2.1" evidence="1"/>
<dbReference type="EMBL" id="CP000157">
    <property type="protein sequence ID" value="ABC63222.1"/>
    <property type="molecule type" value="Genomic_DNA"/>
</dbReference>
<dbReference type="RefSeq" id="WP_011414058.1">
    <property type="nucleotide sequence ID" value="NC_007722.1"/>
</dbReference>
<dbReference type="SMR" id="Q2NAR9"/>
<dbReference type="STRING" id="314225.ELI_05650"/>
<dbReference type="KEGG" id="eli:ELI_05650"/>
<dbReference type="eggNOG" id="COG0112">
    <property type="taxonomic scope" value="Bacteria"/>
</dbReference>
<dbReference type="HOGENOM" id="CLU_022477_2_1_5"/>
<dbReference type="OrthoDB" id="9803846at2"/>
<dbReference type="UniPathway" id="UPA00193"/>
<dbReference type="UniPathway" id="UPA00288">
    <property type="reaction ID" value="UER01023"/>
</dbReference>
<dbReference type="Proteomes" id="UP000008808">
    <property type="component" value="Chromosome"/>
</dbReference>
<dbReference type="GO" id="GO:0005829">
    <property type="term" value="C:cytosol"/>
    <property type="evidence" value="ECO:0007669"/>
    <property type="project" value="TreeGrafter"/>
</dbReference>
<dbReference type="GO" id="GO:0004372">
    <property type="term" value="F:glycine hydroxymethyltransferase activity"/>
    <property type="evidence" value="ECO:0007669"/>
    <property type="project" value="UniProtKB-UniRule"/>
</dbReference>
<dbReference type="GO" id="GO:0030170">
    <property type="term" value="F:pyridoxal phosphate binding"/>
    <property type="evidence" value="ECO:0007669"/>
    <property type="project" value="UniProtKB-UniRule"/>
</dbReference>
<dbReference type="GO" id="GO:0019264">
    <property type="term" value="P:glycine biosynthetic process from serine"/>
    <property type="evidence" value="ECO:0007669"/>
    <property type="project" value="UniProtKB-UniRule"/>
</dbReference>
<dbReference type="GO" id="GO:0035999">
    <property type="term" value="P:tetrahydrofolate interconversion"/>
    <property type="evidence" value="ECO:0007669"/>
    <property type="project" value="UniProtKB-UniRule"/>
</dbReference>
<dbReference type="CDD" id="cd00378">
    <property type="entry name" value="SHMT"/>
    <property type="match status" value="1"/>
</dbReference>
<dbReference type="FunFam" id="3.40.640.10:FF:000001">
    <property type="entry name" value="Serine hydroxymethyltransferase"/>
    <property type="match status" value="1"/>
</dbReference>
<dbReference type="Gene3D" id="3.90.1150.10">
    <property type="entry name" value="Aspartate Aminotransferase, domain 1"/>
    <property type="match status" value="1"/>
</dbReference>
<dbReference type="Gene3D" id="3.40.640.10">
    <property type="entry name" value="Type I PLP-dependent aspartate aminotransferase-like (Major domain)"/>
    <property type="match status" value="1"/>
</dbReference>
<dbReference type="HAMAP" id="MF_00051">
    <property type="entry name" value="SHMT"/>
    <property type="match status" value="1"/>
</dbReference>
<dbReference type="InterPro" id="IPR015424">
    <property type="entry name" value="PyrdxlP-dep_Trfase"/>
</dbReference>
<dbReference type="InterPro" id="IPR015421">
    <property type="entry name" value="PyrdxlP-dep_Trfase_major"/>
</dbReference>
<dbReference type="InterPro" id="IPR015422">
    <property type="entry name" value="PyrdxlP-dep_Trfase_small"/>
</dbReference>
<dbReference type="InterPro" id="IPR001085">
    <property type="entry name" value="Ser_HO-MeTrfase"/>
</dbReference>
<dbReference type="InterPro" id="IPR049943">
    <property type="entry name" value="Ser_HO-MeTrfase-like"/>
</dbReference>
<dbReference type="InterPro" id="IPR019798">
    <property type="entry name" value="Ser_HO-MeTrfase_PLP_BS"/>
</dbReference>
<dbReference type="InterPro" id="IPR039429">
    <property type="entry name" value="SHMT-like_dom"/>
</dbReference>
<dbReference type="NCBIfam" id="NF000586">
    <property type="entry name" value="PRK00011.1"/>
    <property type="match status" value="1"/>
</dbReference>
<dbReference type="PANTHER" id="PTHR11680">
    <property type="entry name" value="SERINE HYDROXYMETHYLTRANSFERASE"/>
    <property type="match status" value="1"/>
</dbReference>
<dbReference type="PANTHER" id="PTHR11680:SF35">
    <property type="entry name" value="SERINE HYDROXYMETHYLTRANSFERASE 1"/>
    <property type="match status" value="1"/>
</dbReference>
<dbReference type="Pfam" id="PF00464">
    <property type="entry name" value="SHMT"/>
    <property type="match status" value="1"/>
</dbReference>
<dbReference type="PIRSF" id="PIRSF000412">
    <property type="entry name" value="SHMT"/>
    <property type="match status" value="1"/>
</dbReference>
<dbReference type="SUPFAM" id="SSF53383">
    <property type="entry name" value="PLP-dependent transferases"/>
    <property type="match status" value="1"/>
</dbReference>
<dbReference type="PROSITE" id="PS00096">
    <property type="entry name" value="SHMT"/>
    <property type="match status" value="1"/>
</dbReference>
<keyword id="KW-0028">Amino-acid biosynthesis</keyword>
<keyword id="KW-0963">Cytoplasm</keyword>
<keyword id="KW-0554">One-carbon metabolism</keyword>
<keyword id="KW-0663">Pyridoxal phosphate</keyword>
<keyword id="KW-1185">Reference proteome</keyword>
<keyword id="KW-0808">Transferase</keyword>